<accession>B2K0R0</accession>
<feature type="chain" id="PRO_1000120489" description="UPF0149 protein YPTS_3318">
    <location>
        <begin position="1"/>
        <end position="192"/>
    </location>
</feature>
<comment type="similarity">
    <text evidence="1">Belongs to the UPF0149 family.</text>
</comment>
<sequence length="192" mass="21131">MSIENTLPTYPSLALALSQQAVALTPAEMHGLISGMLCGGSKDNGWQTLVHDLTNEGVAFPQALSLPLQQLHEATQEALENEGFMFQLLIPEGEDVTVFDRADALSGWVNHFLLGLGMLQPKLAQVKDEVGEAIDDLRNIAQLGYDEDEDQEELAQSLEEVVEYVRVAAILCHIEFTQQKPTAPEMHKPTLH</sequence>
<evidence type="ECO:0000255" key="1">
    <source>
        <dbReference type="HAMAP-Rule" id="MF_00346"/>
    </source>
</evidence>
<organism>
    <name type="scientific">Yersinia pseudotuberculosis serotype IB (strain PB1/+)</name>
    <dbReference type="NCBI Taxonomy" id="502801"/>
    <lineage>
        <taxon>Bacteria</taxon>
        <taxon>Pseudomonadati</taxon>
        <taxon>Pseudomonadota</taxon>
        <taxon>Gammaproteobacteria</taxon>
        <taxon>Enterobacterales</taxon>
        <taxon>Yersiniaceae</taxon>
        <taxon>Yersinia</taxon>
    </lineage>
</organism>
<proteinExistence type="inferred from homology"/>
<dbReference type="EMBL" id="CP001048">
    <property type="protein sequence ID" value="ACC90273.1"/>
    <property type="molecule type" value="Genomic_DNA"/>
</dbReference>
<dbReference type="RefSeq" id="WP_002209953.1">
    <property type="nucleotide sequence ID" value="NZ_CP009780.1"/>
</dbReference>
<dbReference type="SMR" id="B2K0R0"/>
<dbReference type="KEGG" id="ypb:YPTS_3318"/>
<dbReference type="PATRIC" id="fig|502801.10.peg.2758"/>
<dbReference type="GO" id="GO:0005829">
    <property type="term" value="C:cytosol"/>
    <property type="evidence" value="ECO:0007669"/>
    <property type="project" value="TreeGrafter"/>
</dbReference>
<dbReference type="FunFam" id="1.20.120.740:FF:000001">
    <property type="entry name" value="UPF0149 protein YgfB"/>
    <property type="match status" value="1"/>
</dbReference>
<dbReference type="Gene3D" id="1.20.120.740">
    <property type="entry name" value="YgfB uncharacterised protein family UPF0149, PF03695"/>
    <property type="match status" value="1"/>
</dbReference>
<dbReference type="HAMAP" id="MF_00346">
    <property type="entry name" value="UPF0149"/>
    <property type="match status" value="1"/>
</dbReference>
<dbReference type="InterPro" id="IPR011978">
    <property type="entry name" value="YgfB-like"/>
</dbReference>
<dbReference type="InterPro" id="IPR036255">
    <property type="entry name" value="YgfB-like_sf"/>
</dbReference>
<dbReference type="NCBIfam" id="NF002477">
    <property type="entry name" value="PRK01736.1"/>
    <property type="match status" value="1"/>
</dbReference>
<dbReference type="NCBIfam" id="TIGR02292">
    <property type="entry name" value="ygfB_yecA"/>
    <property type="match status" value="1"/>
</dbReference>
<dbReference type="PANTHER" id="PTHR37528">
    <property type="entry name" value="UPF0149 PROTEIN YGFB"/>
    <property type="match status" value="1"/>
</dbReference>
<dbReference type="PANTHER" id="PTHR37528:SF1">
    <property type="entry name" value="UPF0149 PROTEIN YGFB"/>
    <property type="match status" value="1"/>
</dbReference>
<dbReference type="Pfam" id="PF03695">
    <property type="entry name" value="UPF0149"/>
    <property type="match status" value="1"/>
</dbReference>
<dbReference type="SUPFAM" id="SSF101327">
    <property type="entry name" value="YgfB-like"/>
    <property type="match status" value="1"/>
</dbReference>
<name>Y3318_YERPB</name>
<protein>
    <recommendedName>
        <fullName evidence="1">UPF0149 protein YPTS_3318</fullName>
    </recommendedName>
</protein>
<reference key="1">
    <citation type="submission" date="2008-04" db="EMBL/GenBank/DDBJ databases">
        <title>Complete sequence of Yersinia pseudotuberculosis PB1/+.</title>
        <authorList>
            <person name="Copeland A."/>
            <person name="Lucas S."/>
            <person name="Lapidus A."/>
            <person name="Glavina del Rio T."/>
            <person name="Dalin E."/>
            <person name="Tice H."/>
            <person name="Bruce D."/>
            <person name="Goodwin L."/>
            <person name="Pitluck S."/>
            <person name="Munk A.C."/>
            <person name="Brettin T."/>
            <person name="Detter J.C."/>
            <person name="Han C."/>
            <person name="Tapia R."/>
            <person name="Schmutz J."/>
            <person name="Larimer F."/>
            <person name="Land M."/>
            <person name="Hauser L."/>
            <person name="Challacombe J.F."/>
            <person name="Green L."/>
            <person name="Lindler L.E."/>
            <person name="Nikolich M.P."/>
            <person name="Richardson P."/>
        </authorList>
    </citation>
    <scope>NUCLEOTIDE SEQUENCE [LARGE SCALE GENOMIC DNA]</scope>
    <source>
        <strain>PB1/+</strain>
    </source>
</reference>
<gene>
    <name type="ordered locus">YPTS_3318</name>
</gene>